<gene>
    <name evidence="1" type="primary">mnmA</name>
    <name type="synonym">trmU</name>
    <name type="ordered locus">LA_1487</name>
</gene>
<evidence type="ECO:0000255" key="1">
    <source>
        <dbReference type="HAMAP-Rule" id="MF_00144"/>
    </source>
</evidence>
<comment type="function">
    <text evidence="1">Catalyzes the 2-thiolation of uridine at the wobble position (U34) of tRNA, leading to the formation of s(2)U34.</text>
</comment>
<comment type="catalytic activity">
    <reaction evidence="1">
        <text>S-sulfanyl-L-cysteinyl-[protein] + uridine(34) in tRNA + AH2 + ATP = 2-thiouridine(34) in tRNA + L-cysteinyl-[protein] + A + AMP + diphosphate + H(+)</text>
        <dbReference type="Rhea" id="RHEA:47032"/>
        <dbReference type="Rhea" id="RHEA-COMP:10131"/>
        <dbReference type="Rhea" id="RHEA-COMP:11726"/>
        <dbReference type="Rhea" id="RHEA-COMP:11727"/>
        <dbReference type="Rhea" id="RHEA-COMP:11728"/>
        <dbReference type="ChEBI" id="CHEBI:13193"/>
        <dbReference type="ChEBI" id="CHEBI:15378"/>
        <dbReference type="ChEBI" id="CHEBI:17499"/>
        <dbReference type="ChEBI" id="CHEBI:29950"/>
        <dbReference type="ChEBI" id="CHEBI:30616"/>
        <dbReference type="ChEBI" id="CHEBI:33019"/>
        <dbReference type="ChEBI" id="CHEBI:61963"/>
        <dbReference type="ChEBI" id="CHEBI:65315"/>
        <dbReference type="ChEBI" id="CHEBI:87170"/>
        <dbReference type="ChEBI" id="CHEBI:456215"/>
        <dbReference type="EC" id="2.8.1.13"/>
    </reaction>
</comment>
<comment type="subcellular location">
    <subcellularLocation>
        <location evidence="1">Cytoplasm</location>
    </subcellularLocation>
</comment>
<comment type="similarity">
    <text evidence="1">Belongs to the MnmA/TRMU family.</text>
</comment>
<sequence length="375" mass="41991">MSKGKIIVAMSGGVDSAVTAGLLMEDGYEVIGVNLRTWEYEAPACDTTKKSCCSPEDIRDARDVGISLKIPFYVIKMEKVFQEKVIDRFIEDYQHGKTPNPCVECNTFVKFGALFEKAKALGIDKIATGHYARIARNGERYAIANGIDVGKNQAYYLYGLSQENLKNVIFPLGEMTKPEVRQIARRMGLPVADKSESQEICFIPENDYRKFLEKKNVEFTPGFFKLKDGRIVGKHKGRENFTIGQRKGLGIAWKNPLYVISIEDDGSVILGEENETYNESFSVIDLNFQGLAPLNEGESLECRVQVRYRHIPIRCKITKMKEGLIVHPLEDVRGVTPGQSAVFYPLDSDYLLLGGIISKGSIQMRIVEPAISVLN</sequence>
<protein>
    <recommendedName>
        <fullName evidence="1">tRNA-specific 2-thiouridylase MnmA</fullName>
        <ecNumber evidence="1">2.8.1.13</ecNumber>
    </recommendedName>
</protein>
<keyword id="KW-0067">ATP-binding</keyword>
<keyword id="KW-0963">Cytoplasm</keyword>
<keyword id="KW-1015">Disulfide bond</keyword>
<keyword id="KW-0547">Nucleotide-binding</keyword>
<keyword id="KW-1185">Reference proteome</keyword>
<keyword id="KW-0694">RNA-binding</keyword>
<keyword id="KW-0808">Transferase</keyword>
<keyword id="KW-0819">tRNA processing</keyword>
<keyword id="KW-0820">tRNA-binding</keyword>
<accession>Q8F625</accession>
<organism>
    <name type="scientific">Leptospira interrogans serogroup Icterohaemorrhagiae serovar Lai (strain 56601)</name>
    <dbReference type="NCBI Taxonomy" id="189518"/>
    <lineage>
        <taxon>Bacteria</taxon>
        <taxon>Pseudomonadati</taxon>
        <taxon>Spirochaetota</taxon>
        <taxon>Spirochaetia</taxon>
        <taxon>Leptospirales</taxon>
        <taxon>Leptospiraceae</taxon>
        <taxon>Leptospira</taxon>
    </lineage>
</organism>
<dbReference type="EC" id="2.8.1.13" evidence="1"/>
<dbReference type="EMBL" id="AE010300">
    <property type="protein sequence ID" value="AAN48686.1"/>
    <property type="molecule type" value="Genomic_DNA"/>
</dbReference>
<dbReference type="RefSeq" id="NP_711668.1">
    <property type="nucleotide sequence ID" value="NC_004342.2"/>
</dbReference>
<dbReference type="RefSeq" id="WP_000033460.1">
    <property type="nucleotide sequence ID" value="NC_004342.2"/>
</dbReference>
<dbReference type="SMR" id="Q8F625"/>
<dbReference type="FunCoup" id="Q8F625">
    <property type="interactions" value="509"/>
</dbReference>
<dbReference type="STRING" id="189518.LA_1487"/>
<dbReference type="PaxDb" id="189518-LA_1487"/>
<dbReference type="EnsemblBacteria" id="AAN48686">
    <property type="protein sequence ID" value="AAN48686"/>
    <property type="gene ID" value="LA_1487"/>
</dbReference>
<dbReference type="KEGG" id="lil:LA_1487"/>
<dbReference type="PATRIC" id="fig|189518.3.peg.1486"/>
<dbReference type="HOGENOM" id="CLU_035188_0_0_12"/>
<dbReference type="InParanoid" id="Q8F625"/>
<dbReference type="OrthoDB" id="9800696at2"/>
<dbReference type="Proteomes" id="UP000001408">
    <property type="component" value="Chromosome I"/>
</dbReference>
<dbReference type="GO" id="GO:0005737">
    <property type="term" value="C:cytoplasm"/>
    <property type="evidence" value="ECO:0007669"/>
    <property type="project" value="UniProtKB-SubCell"/>
</dbReference>
<dbReference type="GO" id="GO:0005524">
    <property type="term" value="F:ATP binding"/>
    <property type="evidence" value="ECO:0007669"/>
    <property type="project" value="UniProtKB-KW"/>
</dbReference>
<dbReference type="GO" id="GO:0000049">
    <property type="term" value="F:tRNA binding"/>
    <property type="evidence" value="ECO:0007669"/>
    <property type="project" value="UniProtKB-KW"/>
</dbReference>
<dbReference type="GO" id="GO:0103016">
    <property type="term" value="F:tRNA-uridine 2-sulfurtransferase activity"/>
    <property type="evidence" value="ECO:0007669"/>
    <property type="project" value="UniProtKB-EC"/>
</dbReference>
<dbReference type="GO" id="GO:0002143">
    <property type="term" value="P:tRNA wobble position uridine thiolation"/>
    <property type="evidence" value="ECO:0000318"/>
    <property type="project" value="GO_Central"/>
</dbReference>
<dbReference type="CDD" id="cd01998">
    <property type="entry name" value="MnmA_TRMU-like"/>
    <property type="match status" value="1"/>
</dbReference>
<dbReference type="FunFam" id="3.40.50.620:FF:000115">
    <property type="entry name" value="tRNA-specific 2-thiouridylase MnmA"/>
    <property type="match status" value="1"/>
</dbReference>
<dbReference type="Gene3D" id="2.30.30.280">
    <property type="entry name" value="Adenine nucleotide alpha hydrolases-like domains"/>
    <property type="match status" value="1"/>
</dbReference>
<dbReference type="Gene3D" id="3.40.50.620">
    <property type="entry name" value="HUPs"/>
    <property type="match status" value="1"/>
</dbReference>
<dbReference type="Gene3D" id="2.40.30.10">
    <property type="entry name" value="Translation factors"/>
    <property type="match status" value="1"/>
</dbReference>
<dbReference type="HAMAP" id="MF_00144">
    <property type="entry name" value="tRNA_thiouridyl_MnmA"/>
    <property type="match status" value="1"/>
</dbReference>
<dbReference type="InterPro" id="IPR004506">
    <property type="entry name" value="MnmA-like"/>
</dbReference>
<dbReference type="InterPro" id="IPR046885">
    <property type="entry name" value="MnmA-like_C"/>
</dbReference>
<dbReference type="InterPro" id="IPR046884">
    <property type="entry name" value="MnmA-like_central"/>
</dbReference>
<dbReference type="InterPro" id="IPR023382">
    <property type="entry name" value="MnmA-like_central_sf"/>
</dbReference>
<dbReference type="InterPro" id="IPR014729">
    <property type="entry name" value="Rossmann-like_a/b/a_fold"/>
</dbReference>
<dbReference type="NCBIfam" id="NF001138">
    <property type="entry name" value="PRK00143.1"/>
    <property type="match status" value="1"/>
</dbReference>
<dbReference type="NCBIfam" id="TIGR00420">
    <property type="entry name" value="trmU"/>
    <property type="match status" value="1"/>
</dbReference>
<dbReference type="PANTHER" id="PTHR11933:SF5">
    <property type="entry name" value="MITOCHONDRIAL TRNA-SPECIFIC 2-THIOURIDYLASE 1"/>
    <property type="match status" value="1"/>
</dbReference>
<dbReference type="PANTHER" id="PTHR11933">
    <property type="entry name" value="TRNA 5-METHYLAMINOMETHYL-2-THIOURIDYLATE -METHYLTRANSFERASE"/>
    <property type="match status" value="1"/>
</dbReference>
<dbReference type="Pfam" id="PF03054">
    <property type="entry name" value="tRNA_Me_trans"/>
    <property type="match status" value="1"/>
</dbReference>
<dbReference type="Pfam" id="PF20258">
    <property type="entry name" value="tRNA_Me_trans_C"/>
    <property type="match status" value="1"/>
</dbReference>
<dbReference type="Pfam" id="PF20259">
    <property type="entry name" value="tRNA_Me_trans_M"/>
    <property type="match status" value="1"/>
</dbReference>
<dbReference type="SUPFAM" id="SSF52402">
    <property type="entry name" value="Adenine nucleotide alpha hydrolases-like"/>
    <property type="match status" value="1"/>
</dbReference>
<proteinExistence type="inferred from homology"/>
<reference key="1">
    <citation type="journal article" date="2003" name="Nature">
        <title>Unique physiological and pathogenic features of Leptospira interrogans revealed by whole-genome sequencing.</title>
        <authorList>
            <person name="Ren S.-X."/>
            <person name="Fu G."/>
            <person name="Jiang X.-G."/>
            <person name="Zeng R."/>
            <person name="Miao Y.-G."/>
            <person name="Xu H."/>
            <person name="Zhang Y.-X."/>
            <person name="Xiong H."/>
            <person name="Lu G."/>
            <person name="Lu L.-F."/>
            <person name="Jiang H.-Q."/>
            <person name="Jia J."/>
            <person name="Tu Y.-F."/>
            <person name="Jiang J.-X."/>
            <person name="Gu W.-Y."/>
            <person name="Zhang Y.-Q."/>
            <person name="Cai Z."/>
            <person name="Sheng H.-H."/>
            <person name="Yin H.-F."/>
            <person name="Zhang Y."/>
            <person name="Zhu G.-F."/>
            <person name="Wan M."/>
            <person name="Huang H.-L."/>
            <person name="Qian Z."/>
            <person name="Wang S.-Y."/>
            <person name="Ma W."/>
            <person name="Yao Z.-J."/>
            <person name="Shen Y."/>
            <person name="Qiang B.-Q."/>
            <person name="Xia Q.-C."/>
            <person name="Guo X.-K."/>
            <person name="Danchin A."/>
            <person name="Saint Girons I."/>
            <person name="Somerville R.L."/>
            <person name="Wen Y.-M."/>
            <person name="Shi M.-H."/>
            <person name="Chen Z."/>
            <person name="Xu J.-G."/>
            <person name="Zhao G.-P."/>
        </authorList>
    </citation>
    <scope>NUCLEOTIDE SEQUENCE [LARGE SCALE GENOMIC DNA]</scope>
    <source>
        <strain>56601</strain>
    </source>
</reference>
<feature type="chain" id="PRO_0000121646" description="tRNA-specific 2-thiouridylase MnmA">
    <location>
        <begin position="1"/>
        <end position="375"/>
    </location>
</feature>
<feature type="region of interest" description="Interaction with tRNA" evidence="1">
    <location>
        <begin position="151"/>
        <end position="153"/>
    </location>
</feature>
<feature type="region of interest" description="Interaction with tRNA" evidence="1">
    <location>
        <begin position="307"/>
        <end position="308"/>
    </location>
</feature>
<feature type="active site" description="Nucleophile" evidence="1">
    <location>
        <position position="105"/>
    </location>
</feature>
<feature type="active site" description="Cysteine persulfide intermediate" evidence="1">
    <location>
        <position position="201"/>
    </location>
</feature>
<feature type="binding site" evidence="1">
    <location>
        <begin position="9"/>
        <end position="16"/>
    </location>
    <ligand>
        <name>ATP</name>
        <dbReference type="ChEBI" id="CHEBI:30616"/>
    </ligand>
</feature>
<feature type="binding site" evidence="1">
    <location>
        <position position="35"/>
    </location>
    <ligand>
        <name>ATP</name>
        <dbReference type="ChEBI" id="CHEBI:30616"/>
    </ligand>
</feature>
<feature type="binding site" evidence="1">
    <location>
        <position position="129"/>
    </location>
    <ligand>
        <name>ATP</name>
        <dbReference type="ChEBI" id="CHEBI:30616"/>
    </ligand>
</feature>
<feature type="site" description="Interaction with tRNA" evidence="1">
    <location>
        <position position="130"/>
    </location>
</feature>
<feature type="site" description="Interaction with tRNA" evidence="1">
    <location>
        <position position="339"/>
    </location>
</feature>
<feature type="disulfide bond" description="Alternate" evidence="1">
    <location>
        <begin position="105"/>
        <end position="201"/>
    </location>
</feature>
<name>MNMA_LEPIN</name>